<keyword id="KW-0878">Amphibian defense peptide</keyword>
<keyword id="KW-0044">Antibiotic</keyword>
<keyword id="KW-0929">Antimicrobial</keyword>
<keyword id="KW-0903">Direct protein sequencing</keyword>
<keyword id="KW-1015">Disulfide bond</keyword>
<keyword id="KW-0964">Secreted</keyword>
<reference evidence="3" key="1">
    <citation type="journal article" date="2000" name="Biochim. Biophys. Acta">
        <title>Multiple antimicrobial peptides and peptides related to bradykinin and neuromedin N isolated from skin secretions of the pickerel frog, Rana palustris.</title>
        <authorList>
            <person name="Basir Y.J."/>
            <person name="Knoop F.C."/>
            <person name="Dulka J."/>
            <person name="Conlon J.M."/>
        </authorList>
    </citation>
    <scope>PROTEIN SEQUENCE</scope>
    <scope>FUNCTION</scope>
    <scope>SUBCELLULAR LOCATION</scope>
    <scope>TISSUE SPECIFICITY</scope>
    <scope>MASS SPECTROMETRY</scope>
    <source>
        <tissue evidence="2">Skin secretion</tissue>
    </source>
</reference>
<sequence>GFLSTVKNLATNVAGTVIDTLKCKVTGGCRS</sequence>
<name>PA2C_LITPA</name>
<proteinExistence type="evidence at protein level"/>
<protein>
    <recommendedName>
        <fullName>Palustrin-2c</fullName>
    </recommendedName>
</protein>
<feature type="peptide" id="PRO_0000044741" description="Palustrin-2c">
    <location>
        <begin position="1"/>
        <end position="31"/>
    </location>
</feature>
<feature type="disulfide bond" evidence="1">
    <location>
        <begin position="23"/>
        <end position="29"/>
    </location>
</feature>
<organism>
    <name type="scientific">Lithobates palustris</name>
    <name type="common">Pickerel frog</name>
    <name type="synonym">Rana palustris</name>
    <dbReference type="NCBI Taxonomy" id="298395"/>
    <lineage>
        <taxon>Eukaryota</taxon>
        <taxon>Metazoa</taxon>
        <taxon>Chordata</taxon>
        <taxon>Craniata</taxon>
        <taxon>Vertebrata</taxon>
        <taxon>Euteleostomi</taxon>
        <taxon>Amphibia</taxon>
        <taxon>Batrachia</taxon>
        <taxon>Anura</taxon>
        <taxon>Neobatrachia</taxon>
        <taxon>Ranoidea</taxon>
        <taxon>Ranidae</taxon>
        <taxon>Lithobates</taxon>
    </lineage>
</organism>
<comment type="function">
    <text evidence="2">Antimicrobial activity against Gram-negative bacterium E.coli.</text>
</comment>
<comment type="subcellular location">
    <subcellularLocation>
        <location evidence="2">Secreted</location>
    </subcellularLocation>
</comment>
<comment type="tissue specificity">
    <text evidence="2">Expressed by the skin glands.</text>
</comment>
<comment type="mass spectrometry"/>
<comment type="similarity">
    <text evidence="2">Belongs to the frog skin active peptide (FSAP) family. Brevinin subfamily.</text>
</comment>
<accession>P84280</accession>
<evidence type="ECO:0000250" key="1">
    <source>
        <dbReference type="UniProtKB" id="P82875"/>
    </source>
</evidence>
<evidence type="ECO:0000269" key="2">
    <source>
    </source>
</evidence>
<evidence type="ECO:0000305" key="3"/>
<dbReference type="SMR" id="P84280"/>
<dbReference type="GO" id="GO:0005576">
    <property type="term" value="C:extracellular region"/>
    <property type="evidence" value="ECO:0000314"/>
    <property type="project" value="UniProtKB"/>
</dbReference>
<dbReference type="GO" id="GO:0050829">
    <property type="term" value="P:defense response to Gram-negative bacterium"/>
    <property type="evidence" value="ECO:0000314"/>
    <property type="project" value="UniProtKB"/>
</dbReference>
<dbReference type="InterPro" id="IPR012521">
    <property type="entry name" value="Antimicrobial_frog_2"/>
</dbReference>
<dbReference type="Pfam" id="PF08023">
    <property type="entry name" value="Antimicrobial_2"/>
    <property type="match status" value="1"/>
</dbReference>